<protein>
    <recommendedName>
        <fullName>Synaptosomal-associated protein 25</fullName>
        <shortName>SNAP-25</shortName>
    </recommendedName>
    <alternativeName>
        <fullName>Synaptosomal-associated 25 kDa protein</fullName>
    </alternativeName>
</protein>
<proteinExistence type="evidence at transcript level"/>
<accession>P36975</accession>
<accession>F3YD56</accession>
<accession>Q5LJU6</accession>
<accession>Q7PLV2</accession>
<evidence type="ECO:0000250" key="1"/>
<evidence type="ECO:0000255" key="2">
    <source>
        <dbReference type="PROSITE-ProRule" id="PRU00202"/>
    </source>
</evidence>
<evidence type="ECO:0000269" key="3">
    <source>
    </source>
</evidence>
<evidence type="ECO:0000305" key="4"/>
<gene>
    <name type="primary">Snap25</name>
    <name type="ORF">CG40452</name>
</gene>
<feature type="chain" id="PRO_0000213594" description="Synaptosomal-associated protein 25">
    <location>
        <begin position="1"/>
        <end position="212"/>
    </location>
</feature>
<feature type="domain" description="t-SNARE coiled-coil homology 1" evidence="2">
    <location>
        <begin position="26"/>
        <end position="88"/>
    </location>
</feature>
<feature type="domain" description="t-SNARE coiled-coil homology 2" evidence="2">
    <location>
        <begin position="148"/>
        <end position="210"/>
    </location>
</feature>
<feature type="splice variant" id="VSP_054454" description="In isoform C." evidence="4">
    <original>KEAGIRTLVALDD</original>
    <variation>AEVGMRSIVMLDE</variation>
    <location>
        <begin position="47"/>
        <end position="59"/>
    </location>
</feature>
<sequence>MPADPSEEVAPQVPKTELEELQINAQGVADESLESTRRMLALCEESKEAGIRTLVALDDQGEQLDRIEEGMDQINADMREAEKNLSGMEKCCGICVLPCNKSQSFKEDDGTWKGNDDGKVVNNQPQRVMDDRNGMMAQAGYIGRITNDAREDEMEENMGQVNTMIGNLRNMALDMGSELENQNRQIDRINRKGESNEARIAVANQRAHQLLK</sequence>
<comment type="function">
    <text evidence="1">May play an important role in the synaptic function of specific neuronal systems. Associates with proteins involved in vesicle docking and membrane fusion (By similarity).</text>
</comment>
<comment type="subcellular location">
    <subcellularLocation>
        <location evidence="1">Synapse</location>
        <location evidence="1">Synaptosome</location>
    </subcellularLocation>
    <text evidence="1">Complexed with macromolecular elements of the nerve terminal.</text>
</comment>
<comment type="alternative products">
    <event type="alternative splicing"/>
    <isoform>
        <id>P36975-1</id>
        <name>A</name>
        <sequence type="displayed"/>
    </isoform>
    <isoform>
        <id>P36975-3</id>
        <name>C</name>
        <sequence type="described" ref="VSP_054454"/>
    </isoform>
</comment>
<comment type="tissue specificity">
    <text evidence="3">Exclusively found in brain and ganglia.</text>
</comment>
<comment type="similarity">
    <text evidence="4">Belongs to the SNAP-25 family.</text>
</comment>
<reference key="1">
    <citation type="journal article" date="1993" name="J. Biol. Chem.">
        <title>Evolutionary conservation of synaptosome-associated protein 25 kDa (SNAP-25) shown by Drosophila and Torpedo cDNA clones.</title>
        <authorList>
            <person name="Risinger C."/>
            <person name="Blomqvist A.G."/>
            <person name="Lundell I."/>
            <person name="Lambertsson A."/>
            <person name="Nassel D."/>
            <person name="Pieribone V.A."/>
            <person name="Brodin L."/>
            <person name="Larhammar D."/>
        </authorList>
    </citation>
    <scope>NUCLEOTIDE SEQUENCE [MRNA] (ISOFORM A)</scope>
    <scope>TISSUE SPECIFICITY</scope>
    <source>
        <tissue>Head</tissue>
    </source>
</reference>
<reference key="2">
    <citation type="journal article" date="1997" name="Gene">
        <title>Complex gene organization of synaptic protein SNAP-25 in Drosophila melanogaster.</title>
        <authorList>
            <person name="Risinger C."/>
            <person name="Deitcher D.L."/>
            <person name="Lundell I."/>
            <person name="Schwarz T.L."/>
            <person name="Larhammar D."/>
        </authorList>
    </citation>
    <scope>NUCLEOTIDE SEQUENCE [GENOMIC DNA]</scope>
</reference>
<reference key="3">
    <citation type="journal article" date="2000" name="Science">
        <title>The genome sequence of Drosophila melanogaster.</title>
        <authorList>
            <person name="Adams M.D."/>
            <person name="Celniker S.E."/>
            <person name="Holt R.A."/>
            <person name="Evans C.A."/>
            <person name="Gocayne J.D."/>
            <person name="Amanatides P.G."/>
            <person name="Scherer S.E."/>
            <person name="Li P.W."/>
            <person name="Hoskins R.A."/>
            <person name="Galle R.F."/>
            <person name="George R.A."/>
            <person name="Lewis S.E."/>
            <person name="Richards S."/>
            <person name="Ashburner M."/>
            <person name="Henderson S.N."/>
            <person name="Sutton G.G."/>
            <person name="Wortman J.R."/>
            <person name="Yandell M.D."/>
            <person name="Zhang Q."/>
            <person name="Chen L.X."/>
            <person name="Brandon R.C."/>
            <person name="Rogers Y.-H.C."/>
            <person name="Blazej R.G."/>
            <person name="Champe M."/>
            <person name="Pfeiffer B.D."/>
            <person name="Wan K.H."/>
            <person name="Doyle C."/>
            <person name="Baxter E.G."/>
            <person name="Helt G."/>
            <person name="Nelson C.R."/>
            <person name="Miklos G.L.G."/>
            <person name="Abril J.F."/>
            <person name="Agbayani A."/>
            <person name="An H.-J."/>
            <person name="Andrews-Pfannkoch C."/>
            <person name="Baldwin D."/>
            <person name="Ballew R.M."/>
            <person name="Basu A."/>
            <person name="Baxendale J."/>
            <person name="Bayraktaroglu L."/>
            <person name="Beasley E.M."/>
            <person name="Beeson K.Y."/>
            <person name="Benos P.V."/>
            <person name="Berman B.P."/>
            <person name="Bhandari D."/>
            <person name="Bolshakov S."/>
            <person name="Borkova D."/>
            <person name="Botchan M.R."/>
            <person name="Bouck J."/>
            <person name="Brokstein P."/>
            <person name="Brottier P."/>
            <person name="Burtis K.C."/>
            <person name="Busam D.A."/>
            <person name="Butler H."/>
            <person name="Cadieu E."/>
            <person name="Center A."/>
            <person name="Chandra I."/>
            <person name="Cherry J.M."/>
            <person name="Cawley S."/>
            <person name="Dahlke C."/>
            <person name="Davenport L.B."/>
            <person name="Davies P."/>
            <person name="de Pablos B."/>
            <person name="Delcher A."/>
            <person name="Deng Z."/>
            <person name="Mays A.D."/>
            <person name="Dew I."/>
            <person name="Dietz S.M."/>
            <person name="Dodson K."/>
            <person name="Doup L.E."/>
            <person name="Downes M."/>
            <person name="Dugan-Rocha S."/>
            <person name="Dunkov B.C."/>
            <person name="Dunn P."/>
            <person name="Durbin K.J."/>
            <person name="Evangelista C.C."/>
            <person name="Ferraz C."/>
            <person name="Ferriera S."/>
            <person name="Fleischmann W."/>
            <person name="Fosler C."/>
            <person name="Gabrielian A.E."/>
            <person name="Garg N.S."/>
            <person name="Gelbart W.M."/>
            <person name="Glasser K."/>
            <person name="Glodek A."/>
            <person name="Gong F."/>
            <person name="Gorrell J.H."/>
            <person name="Gu Z."/>
            <person name="Guan P."/>
            <person name="Harris M."/>
            <person name="Harris N.L."/>
            <person name="Harvey D.A."/>
            <person name="Heiman T.J."/>
            <person name="Hernandez J.R."/>
            <person name="Houck J."/>
            <person name="Hostin D."/>
            <person name="Houston K.A."/>
            <person name="Howland T.J."/>
            <person name="Wei M.-H."/>
            <person name="Ibegwam C."/>
            <person name="Jalali M."/>
            <person name="Kalush F."/>
            <person name="Karpen G.H."/>
            <person name="Ke Z."/>
            <person name="Kennison J.A."/>
            <person name="Ketchum K.A."/>
            <person name="Kimmel B.E."/>
            <person name="Kodira C.D."/>
            <person name="Kraft C.L."/>
            <person name="Kravitz S."/>
            <person name="Kulp D."/>
            <person name="Lai Z."/>
            <person name="Lasko P."/>
            <person name="Lei Y."/>
            <person name="Levitsky A.A."/>
            <person name="Li J.H."/>
            <person name="Li Z."/>
            <person name="Liang Y."/>
            <person name="Lin X."/>
            <person name="Liu X."/>
            <person name="Mattei B."/>
            <person name="McIntosh T.C."/>
            <person name="McLeod M.P."/>
            <person name="McPherson D."/>
            <person name="Merkulov G."/>
            <person name="Milshina N.V."/>
            <person name="Mobarry C."/>
            <person name="Morris J."/>
            <person name="Moshrefi A."/>
            <person name="Mount S.M."/>
            <person name="Moy M."/>
            <person name="Murphy B."/>
            <person name="Murphy L."/>
            <person name="Muzny D.M."/>
            <person name="Nelson D.L."/>
            <person name="Nelson D.R."/>
            <person name="Nelson K.A."/>
            <person name="Nixon K."/>
            <person name="Nusskern D.R."/>
            <person name="Pacleb J.M."/>
            <person name="Palazzolo M."/>
            <person name="Pittman G.S."/>
            <person name="Pan S."/>
            <person name="Pollard J."/>
            <person name="Puri V."/>
            <person name="Reese M.G."/>
            <person name="Reinert K."/>
            <person name="Remington K."/>
            <person name="Saunders R.D.C."/>
            <person name="Scheeler F."/>
            <person name="Shen H."/>
            <person name="Shue B.C."/>
            <person name="Siden-Kiamos I."/>
            <person name="Simpson M."/>
            <person name="Skupski M.P."/>
            <person name="Smith T.J."/>
            <person name="Spier E."/>
            <person name="Spradling A.C."/>
            <person name="Stapleton M."/>
            <person name="Strong R."/>
            <person name="Sun E."/>
            <person name="Svirskas R."/>
            <person name="Tector C."/>
            <person name="Turner R."/>
            <person name="Venter E."/>
            <person name="Wang A.H."/>
            <person name="Wang X."/>
            <person name="Wang Z.-Y."/>
            <person name="Wassarman D.A."/>
            <person name="Weinstock G.M."/>
            <person name="Weissenbach J."/>
            <person name="Williams S.M."/>
            <person name="Woodage T."/>
            <person name="Worley K.C."/>
            <person name="Wu D."/>
            <person name="Yang S."/>
            <person name="Yao Q.A."/>
            <person name="Ye J."/>
            <person name="Yeh R.-F."/>
            <person name="Zaveri J.S."/>
            <person name="Zhan M."/>
            <person name="Zhang G."/>
            <person name="Zhao Q."/>
            <person name="Zheng L."/>
            <person name="Zheng X.H."/>
            <person name="Zhong F.N."/>
            <person name="Zhong W."/>
            <person name="Zhou X."/>
            <person name="Zhu S.C."/>
            <person name="Zhu X."/>
            <person name="Smith H.O."/>
            <person name="Gibbs R.A."/>
            <person name="Myers E.W."/>
            <person name="Rubin G.M."/>
            <person name="Venter J.C."/>
        </authorList>
    </citation>
    <scope>NUCLEOTIDE SEQUENCE [LARGE SCALE GENOMIC DNA]</scope>
    <source>
        <strain>Berkeley</strain>
    </source>
</reference>
<reference key="4">
    <citation type="journal article" date="2002" name="Genome Biol.">
        <title>Annotation of the Drosophila melanogaster euchromatic genome: a systematic review.</title>
        <authorList>
            <person name="Misra S."/>
            <person name="Crosby M.A."/>
            <person name="Mungall C.J."/>
            <person name="Matthews B.B."/>
            <person name="Campbell K.S."/>
            <person name="Hradecky P."/>
            <person name="Huang Y."/>
            <person name="Kaminker J.S."/>
            <person name="Millburn G.H."/>
            <person name="Prochnik S.E."/>
            <person name="Smith C.D."/>
            <person name="Tupy J.L."/>
            <person name="Whitfield E.J."/>
            <person name="Bayraktaroglu L."/>
            <person name="Berman B.P."/>
            <person name="Bettencourt B.R."/>
            <person name="Celniker S.E."/>
            <person name="de Grey A.D.N.J."/>
            <person name="Drysdale R.A."/>
            <person name="Harris N.L."/>
            <person name="Richter J."/>
            <person name="Russo S."/>
            <person name="Schroeder A.J."/>
            <person name="Shu S.Q."/>
            <person name="Stapleton M."/>
            <person name="Yamada C."/>
            <person name="Ashburner M."/>
            <person name="Gelbart W.M."/>
            <person name="Rubin G.M."/>
            <person name="Lewis S.E."/>
        </authorList>
    </citation>
    <scope>GENOME REANNOTATION</scope>
    <scope>ALTERNATIVE SPLICING</scope>
    <source>
        <strain>Berkeley</strain>
    </source>
</reference>
<reference key="5">
    <citation type="submission" date="2011-04" db="EMBL/GenBank/DDBJ databases">
        <authorList>
            <person name="Stapleton M."/>
            <person name="Booth B."/>
            <person name="Carlson J.W."/>
            <person name="Chavez C."/>
            <person name="Frise E."/>
            <person name="George R.A."/>
            <person name="Pacleb J.M."/>
            <person name="Park S."/>
            <person name="Wan K.H."/>
            <person name="Yu C."/>
            <person name="Celniker S.E."/>
        </authorList>
    </citation>
    <scope>NUCLEOTIDE SEQUENCE [LARGE SCALE MRNA] (ISOFORM A)</scope>
    <source>
        <strain>Berkeley</strain>
        <tissue>Head</tissue>
    </source>
</reference>
<organism>
    <name type="scientific">Drosophila melanogaster</name>
    <name type="common">Fruit fly</name>
    <dbReference type="NCBI Taxonomy" id="7227"/>
    <lineage>
        <taxon>Eukaryota</taxon>
        <taxon>Metazoa</taxon>
        <taxon>Ecdysozoa</taxon>
        <taxon>Arthropoda</taxon>
        <taxon>Hexapoda</taxon>
        <taxon>Insecta</taxon>
        <taxon>Pterygota</taxon>
        <taxon>Neoptera</taxon>
        <taxon>Endopterygota</taxon>
        <taxon>Diptera</taxon>
        <taxon>Brachycera</taxon>
        <taxon>Muscomorpha</taxon>
        <taxon>Ephydroidea</taxon>
        <taxon>Drosophilidae</taxon>
        <taxon>Drosophila</taxon>
        <taxon>Sophophora</taxon>
    </lineage>
</organism>
<dbReference type="EMBL" id="L22021">
    <property type="protein sequence ID" value="AAA16059.1"/>
    <property type="molecule type" value="mRNA"/>
</dbReference>
<dbReference type="EMBL" id="U81153">
    <property type="protein sequence ID" value="AAB39757.1"/>
    <property type="molecule type" value="Genomic_DNA"/>
</dbReference>
<dbReference type="EMBL" id="U81147">
    <property type="protein sequence ID" value="AAB39757.1"/>
    <property type="status" value="JOINED"/>
    <property type="molecule type" value="Genomic_DNA"/>
</dbReference>
<dbReference type="EMBL" id="U81148">
    <property type="protein sequence ID" value="AAB39757.1"/>
    <property type="status" value="JOINED"/>
    <property type="molecule type" value="Genomic_DNA"/>
</dbReference>
<dbReference type="EMBL" id="U81149">
    <property type="protein sequence ID" value="AAB39757.1"/>
    <property type="status" value="JOINED"/>
    <property type="molecule type" value="Genomic_DNA"/>
</dbReference>
<dbReference type="EMBL" id="U81150">
    <property type="protein sequence ID" value="AAB39757.1"/>
    <property type="status" value="JOINED"/>
    <property type="molecule type" value="Genomic_DNA"/>
</dbReference>
<dbReference type="EMBL" id="U81151">
    <property type="protein sequence ID" value="AAB39757.1"/>
    <property type="status" value="JOINED"/>
    <property type="molecule type" value="Genomic_DNA"/>
</dbReference>
<dbReference type="EMBL" id="U81152">
    <property type="protein sequence ID" value="AAB39757.1"/>
    <property type="status" value="JOINED"/>
    <property type="molecule type" value="Genomic_DNA"/>
</dbReference>
<dbReference type="EMBL" id="AE014296">
    <property type="protein sequence ID" value="EAA46071.2"/>
    <property type="molecule type" value="Genomic_DNA"/>
</dbReference>
<dbReference type="EMBL" id="AE014296">
    <property type="protein sequence ID" value="EAL24571.2"/>
    <property type="molecule type" value="Genomic_DNA"/>
</dbReference>
<dbReference type="EMBL" id="BT023789">
    <property type="protein sequence ID" value="AAZ41798.1"/>
    <property type="molecule type" value="mRNA"/>
</dbReference>
<dbReference type="EMBL" id="BT126217">
    <property type="protein sequence ID" value="AEB22096.1"/>
    <property type="molecule type" value="mRNA"/>
</dbReference>
<dbReference type="RefSeq" id="NP_001036641.1">
    <molecule id="P36975-1"/>
    <property type="nucleotide sequence ID" value="NM_001043176.2"/>
</dbReference>
<dbReference type="RefSeq" id="NP_001036642.2">
    <molecule id="P36975-3"/>
    <property type="nucleotide sequence ID" value="NM_001043177.3"/>
</dbReference>
<dbReference type="SMR" id="P36975"/>
<dbReference type="BioGRID" id="78209">
    <property type="interactions" value="27"/>
</dbReference>
<dbReference type="DIP" id="DIP-23273N"/>
<dbReference type="FunCoup" id="P36975">
    <property type="interactions" value="136"/>
</dbReference>
<dbReference type="STRING" id="7227.FBpp0110435"/>
<dbReference type="SwissPalm" id="P36975"/>
<dbReference type="PaxDb" id="7227-FBpp0110435"/>
<dbReference type="PeptideAtlas" id="P36975"/>
<dbReference type="DNASU" id="3355084"/>
<dbReference type="EnsemblMetazoa" id="FBtr0111143">
    <molecule id="P36975-1"/>
    <property type="protein sequence ID" value="FBpp0110435"/>
    <property type="gene ID" value="FBgn0011288"/>
</dbReference>
<dbReference type="EnsemblMetazoa" id="FBtr0304625">
    <molecule id="P36975-3"/>
    <property type="protein sequence ID" value="FBpp0293167"/>
    <property type="gene ID" value="FBgn0011288"/>
</dbReference>
<dbReference type="GeneID" id="3355084"/>
<dbReference type="KEGG" id="dme:Dmel_CG40452"/>
<dbReference type="AGR" id="FB:FBgn0011288"/>
<dbReference type="CTD" id="6616"/>
<dbReference type="FlyBase" id="FBgn0011288">
    <property type="gene designation" value="Snap25"/>
</dbReference>
<dbReference type="VEuPathDB" id="VectorBase:FBgn0011288"/>
<dbReference type="eggNOG" id="KOG3065">
    <property type="taxonomic scope" value="Eukaryota"/>
</dbReference>
<dbReference type="GeneTree" id="ENSGT00950000182843"/>
<dbReference type="HOGENOM" id="CLU_096939_0_0_1"/>
<dbReference type="InParanoid" id="P36975"/>
<dbReference type="OMA" id="GMIQINE"/>
<dbReference type="OrthoDB" id="19261at2759"/>
<dbReference type="PhylomeDB" id="P36975"/>
<dbReference type="Reactome" id="R-DME-181429">
    <property type="pathway name" value="Serotonin Neurotransmitter Release Cycle"/>
</dbReference>
<dbReference type="Reactome" id="R-DME-181430">
    <property type="pathway name" value="Norepinephrine Neurotransmitter Release Cycle"/>
</dbReference>
<dbReference type="Reactome" id="R-DME-199992">
    <property type="pathway name" value="trans-Golgi Network Vesicle Budding"/>
</dbReference>
<dbReference type="Reactome" id="R-DME-210500">
    <property type="pathway name" value="Glutamate Neurotransmitter Release Cycle"/>
</dbReference>
<dbReference type="Reactome" id="R-DME-212676">
    <property type="pathway name" value="Dopamine Neurotransmitter Release Cycle"/>
</dbReference>
<dbReference type="Reactome" id="R-DME-264642">
    <property type="pathway name" value="Acetylcholine Neurotransmitter Release Cycle"/>
</dbReference>
<dbReference type="Reactome" id="R-DME-449836">
    <property type="pathway name" value="Other interleukin signaling"/>
</dbReference>
<dbReference type="Reactome" id="R-DME-6798695">
    <property type="pathway name" value="Neutrophil degranulation"/>
</dbReference>
<dbReference type="Reactome" id="R-DME-888590">
    <property type="pathway name" value="GABA synthesis, release, reuptake and degradation"/>
</dbReference>
<dbReference type="Reactome" id="R-DME-8980692">
    <property type="pathway name" value="RHOA GTPase cycle"/>
</dbReference>
<dbReference type="Reactome" id="R-DME-9013026">
    <property type="pathway name" value="RHOB GTPase cycle"/>
</dbReference>
<dbReference type="Reactome" id="R-DME-9013149">
    <property type="pathway name" value="RAC1 GTPase cycle"/>
</dbReference>
<dbReference type="Reactome" id="R-DME-9013406">
    <property type="pathway name" value="RHOQ GTPase cycle"/>
</dbReference>
<dbReference type="Reactome" id="R-DME-9013423">
    <property type="pathway name" value="RAC3 GTPase cycle"/>
</dbReference>
<dbReference type="Reactome" id="R-DME-9035034">
    <property type="pathway name" value="RHOF GTPase cycle"/>
</dbReference>
<dbReference type="BioGRID-ORCS" id="3355084">
    <property type="hits" value="0 hits in 3 CRISPR screens"/>
</dbReference>
<dbReference type="ChiTaRS" id="Snap25">
    <property type="organism name" value="fly"/>
</dbReference>
<dbReference type="GenomeRNAi" id="3355084"/>
<dbReference type="PRO" id="PR:P36975"/>
<dbReference type="Proteomes" id="UP000000803">
    <property type="component" value="Chromosome 3L"/>
</dbReference>
<dbReference type="Bgee" id="FBgn0011288">
    <property type="expression patterns" value="Expressed in transmedullary Y neuron TmY14 in brain and 184 other cell types or tissues"/>
</dbReference>
<dbReference type="GO" id="GO:0005737">
    <property type="term" value="C:cytoplasm"/>
    <property type="evidence" value="ECO:0000250"/>
    <property type="project" value="UniProtKB"/>
</dbReference>
<dbReference type="GO" id="GO:0016020">
    <property type="term" value="C:membrane"/>
    <property type="evidence" value="ECO:0000250"/>
    <property type="project" value="UniProtKB"/>
</dbReference>
<dbReference type="GO" id="GO:0005886">
    <property type="term" value="C:plasma membrane"/>
    <property type="evidence" value="ECO:0000318"/>
    <property type="project" value="GO_Central"/>
</dbReference>
<dbReference type="GO" id="GO:0031201">
    <property type="term" value="C:SNARE complex"/>
    <property type="evidence" value="ECO:0000314"/>
    <property type="project" value="FlyBase"/>
</dbReference>
<dbReference type="GO" id="GO:0043195">
    <property type="term" value="C:terminal bouton"/>
    <property type="evidence" value="ECO:0000314"/>
    <property type="project" value="FlyBase"/>
</dbReference>
<dbReference type="GO" id="GO:0005484">
    <property type="term" value="F:SNAP receptor activity"/>
    <property type="evidence" value="ECO:0000314"/>
    <property type="project" value="FlyBase"/>
</dbReference>
<dbReference type="GO" id="GO:0000149">
    <property type="term" value="F:SNARE binding"/>
    <property type="evidence" value="ECO:0000353"/>
    <property type="project" value="FlyBase"/>
</dbReference>
<dbReference type="GO" id="GO:0019905">
    <property type="term" value="F:syntaxin binding"/>
    <property type="evidence" value="ECO:0000318"/>
    <property type="project" value="GO_Central"/>
</dbReference>
<dbReference type="GO" id="GO:0006887">
    <property type="term" value="P:exocytosis"/>
    <property type="evidence" value="ECO:0000318"/>
    <property type="project" value="GO_Central"/>
</dbReference>
<dbReference type="GO" id="GO:0007274">
    <property type="term" value="P:neuromuscular synaptic transmission"/>
    <property type="evidence" value="ECO:0000270"/>
    <property type="project" value="FlyBase"/>
</dbReference>
<dbReference type="GO" id="GO:0007269">
    <property type="term" value="P:neurotransmitter secretion"/>
    <property type="evidence" value="ECO:0000303"/>
    <property type="project" value="FlyBase"/>
</dbReference>
<dbReference type="GO" id="GO:0048172">
    <property type="term" value="P:regulation of short-term neuronal synaptic plasticity"/>
    <property type="evidence" value="ECO:0000314"/>
    <property type="project" value="FlyBase"/>
</dbReference>
<dbReference type="GO" id="GO:0016081">
    <property type="term" value="P:synaptic vesicle docking"/>
    <property type="evidence" value="ECO:0000303"/>
    <property type="project" value="FlyBase"/>
</dbReference>
<dbReference type="GO" id="GO:0031629">
    <property type="term" value="P:synaptic vesicle fusion to presynaptic active zone membrane"/>
    <property type="evidence" value="ECO:0000314"/>
    <property type="project" value="FlyBase"/>
</dbReference>
<dbReference type="GO" id="GO:0016082">
    <property type="term" value="P:synaptic vesicle priming"/>
    <property type="evidence" value="ECO:0000314"/>
    <property type="project" value="FlyBase"/>
</dbReference>
<dbReference type="GO" id="GO:0048489">
    <property type="term" value="P:synaptic vesicle transport"/>
    <property type="evidence" value="ECO:0000314"/>
    <property type="project" value="FlyBase"/>
</dbReference>
<dbReference type="GO" id="GO:0006906">
    <property type="term" value="P:vesicle fusion"/>
    <property type="evidence" value="ECO:0000314"/>
    <property type="project" value="FlyBase"/>
</dbReference>
<dbReference type="GO" id="GO:0016192">
    <property type="term" value="P:vesicle-mediated transport"/>
    <property type="evidence" value="ECO:0000303"/>
    <property type="project" value="FlyBase"/>
</dbReference>
<dbReference type="CDD" id="cd15885">
    <property type="entry name" value="SNARE_SNAP25C"/>
    <property type="match status" value="1"/>
</dbReference>
<dbReference type="CDD" id="cd15889">
    <property type="entry name" value="SNARE_SNAP25N_23N"/>
    <property type="match status" value="1"/>
</dbReference>
<dbReference type="FunFam" id="1.20.5.110:FF:000007">
    <property type="entry name" value="Synaptosomal-associated protein"/>
    <property type="match status" value="1"/>
</dbReference>
<dbReference type="FunFam" id="1.20.5.110:FF:000018">
    <property type="entry name" value="Synaptosomal-associated protein"/>
    <property type="match status" value="1"/>
</dbReference>
<dbReference type="Gene3D" id="1.20.5.110">
    <property type="match status" value="2"/>
</dbReference>
<dbReference type="InterPro" id="IPR000928">
    <property type="entry name" value="SNAP-25_dom"/>
</dbReference>
<dbReference type="InterPro" id="IPR000727">
    <property type="entry name" value="T_SNARE_dom"/>
</dbReference>
<dbReference type="PANTHER" id="PTHR19305">
    <property type="entry name" value="SYNAPTOSOMAL ASSOCIATED PROTEIN"/>
    <property type="match status" value="1"/>
</dbReference>
<dbReference type="PANTHER" id="PTHR19305:SF14">
    <property type="entry name" value="SYNAPTOSOMAL-ASSOCIATED PROTEIN-RELATED"/>
    <property type="match status" value="1"/>
</dbReference>
<dbReference type="Pfam" id="PF00835">
    <property type="entry name" value="SNAP-25"/>
    <property type="match status" value="1"/>
</dbReference>
<dbReference type="SMART" id="SM00397">
    <property type="entry name" value="t_SNARE"/>
    <property type="match status" value="2"/>
</dbReference>
<dbReference type="SUPFAM" id="SSF58038">
    <property type="entry name" value="SNARE fusion complex"/>
    <property type="match status" value="2"/>
</dbReference>
<dbReference type="PROSITE" id="PS50192">
    <property type="entry name" value="T_SNARE"/>
    <property type="match status" value="2"/>
</dbReference>
<name>SNP25_DROME</name>
<keyword id="KW-0025">Alternative splicing</keyword>
<keyword id="KW-0175">Coiled coil</keyword>
<keyword id="KW-1185">Reference proteome</keyword>
<keyword id="KW-0677">Repeat</keyword>
<keyword id="KW-0770">Synapse</keyword>
<keyword id="KW-0771">Synaptosome</keyword>